<keyword id="KW-0238">DNA-binding</keyword>
<keyword id="KW-0539">Nucleus</keyword>
<keyword id="KW-0597">Phosphoprotein</keyword>
<keyword id="KW-1185">Reference proteome</keyword>
<keyword id="KW-0804">Transcription</keyword>
<keyword id="KW-0805">Transcription regulation</keyword>
<comment type="function">
    <text evidence="1">Binds to nonmethylated 5'-d(CGG)(n)-3' trinucleotide repeats in the FMR1 promoter. May play a role in regulating FMR1 promoter (By similarity).</text>
</comment>
<comment type="subcellular location">
    <subcellularLocation>
        <location evidence="1">Nucleus</location>
    </subcellularLocation>
</comment>
<comment type="miscellaneous">
    <text evidence="1">Binding is severely inhibited by complete or partial cytosine-specific DNA methylation of the binding motif.</text>
</comment>
<feature type="chain" id="PRO_0000252416" description="CGG triplet repeat-binding protein 1">
    <location>
        <begin position="1"/>
        <end position="167"/>
    </location>
</feature>
<feature type="region of interest" description="Disordered" evidence="4">
    <location>
        <begin position="65"/>
        <end position="86"/>
    </location>
</feature>
<feature type="short sequence motif" description="Nuclear localization signal" evidence="3">
    <location>
        <begin position="80"/>
        <end position="84"/>
    </location>
</feature>
<feature type="modified residue" description="Phosphoserine" evidence="2">
    <location>
        <position position="56"/>
    </location>
</feature>
<feature type="modified residue" description="Phosphoserine" evidence="2">
    <location>
        <position position="164"/>
    </location>
</feature>
<reference key="1">
    <citation type="journal article" date="2004" name="Genomics">
        <title>Gene structure and expression of the 5'-(CGG)(n)-3'-binding protein (CGGBP1).</title>
        <authorList>
            <person name="Naumann F."/>
            <person name="Remus R."/>
            <person name="Schmitz B."/>
            <person name="Doerfler W."/>
        </authorList>
    </citation>
    <scope>NUCLEOTIDE SEQUENCE [GENOMIC DNA]</scope>
    <source>
        <strain>C57BL/6J</strain>
    </source>
</reference>
<reference key="2">
    <citation type="journal article" date="2005" name="Science">
        <title>The transcriptional landscape of the mammalian genome.</title>
        <authorList>
            <person name="Carninci P."/>
            <person name="Kasukawa T."/>
            <person name="Katayama S."/>
            <person name="Gough J."/>
            <person name="Frith M.C."/>
            <person name="Maeda N."/>
            <person name="Oyama R."/>
            <person name="Ravasi T."/>
            <person name="Lenhard B."/>
            <person name="Wells C."/>
            <person name="Kodzius R."/>
            <person name="Shimokawa K."/>
            <person name="Bajic V.B."/>
            <person name="Brenner S.E."/>
            <person name="Batalov S."/>
            <person name="Forrest A.R."/>
            <person name="Zavolan M."/>
            <person name="Davis M.J."/>
            <person name="Wilming L.G."/>
            <person name="Aidinis V."/>
            <person name="Allen J.E."/>
            <person name="Ambesi-Impiombato A."/>
            <person name="Apweiler R."/>
            <person name="Aturaliya R.N."/>
            <person name="Bailey T.L."/>
            <person name="Bansal M."/>
            <person name="Baxter L."/>
            <person name="Beisel K.W."/>
            <person name="Bersano T."/>
            <person name="Bono H."/>
            <person name="Chalk A.M."/>
            <person name="Chiu K.P."/>
            <person name="Choudhary V."/>
            <person name="Christoffels A."/>
            <person name="Clutterbuck D.R."/>
            <person name="Crowe M.L."/>
            <person name="Dalla E."/>
            <person name="Dalrymple B.P."/>
            <person name="de Bono B."/>
            <person name="Della Gatta G."/>
            <person name="di Bernardo D."/>
            <person name="Down T."/>
            <person name="Engstrom P."/>
            <person name="Fagiolini M."/>
            <person name="Faulkner G."/>
            <person name="Fletcher C.F."/>
            <person name="Fukushima T."/>
            <person name="Furuno M."/>
            <person name="Futaki S."/>
            <person name="Gariboldi M."/>
            <person name="Georgii-Hemming P."/>
            <person name="Gingeras T.R."/>
            <person name="Gojobori T."/>
            <person name="Green R.E."/>
            <person name="Gustincich S."/>
            <person name="Harbers M."/>
            <person name="Hayashi Y."/>
            <person name="Hensch T.K."/>
            <person name="Hirokawa N."/>
            <person name="Hill D."/>
            <person name="Huminiecki L."/>
            <person name="Iacono M."/>
            <person name="Ikeo K."/>
            <person name="Iwama A."/>
            <person name="Ishikawa T."/>
            <person name="Jakt M."/>
            <person name="Kanapin A."/>
            <person name="Katoh M."/>
            <person name="Kawasawa Y."/>
            <person name="Kelso J."/>
            <person name="Kitamura H."/>
            <person name="Kitano H."/>
            <person name="Kollias G."/>
            <person name="Krishnan S.P."/>
            <person name="Kruger A."/>
            <person name="Kummerfeld S.K."/>
            <person name="Kurochkin I.V."/>
            <person name="Lareau L.F."/>
            <person name="Lazarevic D."/>
            <person name="Lipovich L."/>
            <person name="Liu J."/>
            <person name="Liuni S."/>
            <person name="McWilliam S."/>
            <person name="Madan Babu M."/>
            <person name="Madera M."/>
            <person name="Marchionni L."/>
            <person name="Matsuda H."/>
            <person name="Matsuzawa S."/>
            <person name="Miki H."/>
            <person name="Mignone F."/>
            <person name="Miyake S."/>
            <person name="Morris K."/>
            <person name="Mottagui-Tabar S."/>
            <person name="Mulder N."/>
            <person name="Nakano N."/>
            <person name="Nakauchi H."/>
            <person name="Ng P."/>
            <person name="Nilsson R."/>
            <person name="Nishiguchi S."/>
            <person name="Nishikawa S."/>
            <person name="Nori F."/>
            <person name="Ohara O."/>
            <person name="Okazaki Y."/>
            <person name="Orlando V."/>
            <person name="Pang K.C."/>
            <person name="Pavan W.J."/>
            <person name="Pavesi G."/>
            <person name="Pesole G."/>
            <person name="Petrovsky N."/>
            <person name="Piazza S."/>
            <person name="Reed J."/>
            <person name="Reid J.F."/>
            <person name="Ring B.Z."/>
            <person name="Ringwald M."/>
            <person name="Rost B."/>
            <person name="Ruan Y."/>
            <person name="Salzberg S.L."/>
            <person name="Sandelin A."/>
            <person name="Schneider C."/>
            <person name="Schoenbach C."/>
            <person name="Sekiguchi K."/>
            <person name="Semple C.A."/>
            <person name="Seno S."/>
            <person name="Sessa L."/>
            <person name="Sheng Y."/>
            <person name="Shibata Y."/>
            <person name="Shimada H."/>
            <person name="Shimada K."/>
            <person name="Silva D."/>
            <person name="Sinclair B."/>
            <person name="Sperling S."/>
            <person name="Stupka E."/>
            <person name="Sugiura K."/>
            <person name="Sultana R."/>
            <person name="Takenaka Y."/>
            <person name="Taki K."/>
            <person name="Tammoja K."/>
            <person name="Tan S.L."/>
            <person name="Tang S."/>
            <person name="Taylor M.S."/>
            <person name="Tegner J."/>
            <person name="Teichmann S.A."/>
            <person name="Ueda H.R."/>
            <person name="van Nimwegen E."/>
            <person name="Verardo R."/>
            <person name="Wei C.L."/>
            <person name="Yagi K."/>
            <person name="Yamanishi H."/>
            <person name="Zabarovsky E."/>
            <person name="Zhu S."/>
            <person name="Zimmer A."/>
            <person name="Hide W."/>
            <person name="Bult C."/>
            <person name="Grimmond S.M."/>
            <person name="Teasdale R.D."/>
            <person name="Liu E.T."/>
            <person name="Brusic V."/>
            <person name="Quackenbush J."/>
            <person name="Wahlestedt C."/>
            <person name="Mattick J.S."/>
            <person name="Hume D.A."/>
            <person name="Kai C."/>
            <person name="Sasaki D."/>
            <person name="Tomaru Y."/>
            <person name="Fukuda S."/>
            <person name="Kanamori-Katayama M."/>
            <person name="Suzuki M."/>
            <person name="Aoki J."/>
            <person name="Arakawa T."/>
            <person name="Iida J."/>
            <person name="Imamura K."/>
            <person name="Itoh M."/>
            <person name="Kato T."/>
            <person name="Kawaji H."/>
            <person name="Kawagashira N."/>
            <person name="Kawashima T."/>
            <person name="Kojima M."/>
            <person name="Kondo S."/>
            <person name="Konno H."/>
            <person name="Nakano K."/>
            <person name="Ninomiya N."/>
            <person name="Nishio T."/>
            <person name="Okada M."/>
            <person name="Plessy C."/>
            <person name="Shibata K."/>
            <person name="Shiraki T."/>
            <person name="Suzuki S."/>
            <person name="Tagami M."/>
            <person name="Waki K."/>
            <person name="Watahiki A."/>
            <person name="Okamura-Oho Y."/>
            <person name="Suzuki H."/>
            <person name="Kawai J."/>
            <person name="Hayashizaki Y."/>
        </authorList>
    </citation>
    <scope>NUCLEOTIDE SEQUENCE [LARGE SCALE MRNA]</scope>
    <source>
        <strain>C57BL/6J</strain>
        <tissue>Embryo</tissue>
        <tissue>Heart</tissue>
        <tissue>Spinal cord</tissue>
    </source>
</reference>
<reference key="3">
    <citation type="journal article" date="2004" name="Genome Res.">
        <title>The status, quality, and expansion of the NIH full-length cDNA project: the Mammalian Gene Collection (MGC).</title>
        <authorList>
            <consortium name="The MGC Project Team"/>
        </authorList>
    </citation>
    <scope>NUCLEOTIDE SEQUENCE [LARGE SCALE MRNA]</scope>
    <source>
        <strain>C57BL/6J</strain>
        <strain>Czech II</strain>
        <tissue>Brain</tissue>
        <tissue>Mammary tumor</tissue>
    </source>
</reference>
<reference key="4">
    <citation type="journal article" date="2010" name="Cell">
        <title>A tissue-specific atlas of mouse protein phosphorylation and expression.</title>
        <authorList>
            <person name="Huttlin E.L."/>
            <person name="Jedrychowski M.P."/>
            <person name="Elias J.E."/>
            <person name="Goswami T."/>
            <person name="Rad R."/>
            <person name="Beausoleil S.A."/>
            <person name="Villen J."/>
            <person name="Haas W."/>
            <person name="Sowa M.E."/>
            <person name="Gygi S.P."/>
        </authorList>
    </citation>
    <scope>IDENTIFICATION BY MASS SPECTROMETRY [LARGE SCALE ANALYSIS]</scope>
    <source>
        <tissue>Kidney</tissue>
        <tissue>Lung</tissue>
        <tissue>Pancreas</tissue>
        <tissue>Spleen</tissue>
    </source>
</reference>
<name>CGBP1_MOUSE</name>
<organism>
    <name type="scientific">Mus musculus</name>
    <name type="common">Mouse</name>
    <dbReference type="NCBI Taxonomy" id="10090"/>
    <lineage>
        <taxon>Eukaryota</taxon>
        <taxon>Metazoa</taxon>
        <taxon>Chordata</taxon>
        <taxon>Craniata</taxon>
        <taxon>Vertebrata</taxon>
        <taxon>Euteleostomi</taxon>
        <taxon>Mammalia</taxon>
        <taxon>Eutheria</taxon>
        <taxon>Euarchontoglires</taxon>
        <taxon>Glires</taxon>
        <taxon>Rodentia</taxon>
        <taxon>Myomorpha</taxon>
        <taxon>Muroidea</taxon>
        <taxon>Muridae</taxon>
        <taxon>Murinae</taxon>
        <taxon>Mus</taxon>
        <taxon>Mus</taxon>
    </lineage>
</organism>
<protein>
    <recommendedName>
        <fullName>CGG triplet repeat-binding protein 1</fullName>
        <shortName>CGG-binding protein 1</shortName>
    </recommendedName>
    <alternativeName>
        <fullName>20 kDa CGG-binding protein</fullName>
    </alternativeName>
    <alternativeName>
        <fullName>p20-CGGBP DNA-binding protein</fullName>
    </alternativeName>
</protein>
<gene>
    <name type="primary">Cggbp1</name>
</gene>
<proteinExistence type="evidence at protein level"/>
<evidence type="ECO:0000250" key="1"/>
<evidence type="ECO:0000250" key="2">
    <source>
        <dbReference type="UniProtKB" id="Q9UFW8"/>
    </source>
</evidence>
<evidence type="ECO:0000255" key="3"/>
<evidence type="ECO:0000256" key="4">
    <source>
        <dbReference type="SAM" id="MobiDB-lite"/>
    </source>
</evidence>
<sequence length="167" mass="18761">MERFVVTAPPARNRSKTALYVTPLDRVTEFGGELHEDGGKLFCTSCNVVLNHVRKSAISDHLKSKTHTKRKAEFEEQNVRKKQRPLTASLQCNSPAQTEKASVIQDFVKMCLEANIPLEKADHPAVRAFLSRHVKNGGSIPKSDQLRRAYLPDGYENENQLLSSQDC</sequence>
<dbReference type="EMBL" id="AY189895">
    <property type="protein sequence ID" value="AAO32829.1"/>
    <property type="molecule type" value="Genomic_DNA"/>
</dbReference>
<dbReference type="EMBL" id="AK049631">
    <property type="protein sequence ID" value="BAC33847.1"/>
    <property type="molecule type" value="mRNA"/>
</dbReference>
<dbReference type="EMBL" id="AK052195">
    <property type="protein sequence ID" value="BAC34877.1"/>
    <property type="molecule type" value="mRNA"/>
</dbReference>
<dbReference type="EMBL" id="AK083450">
    <property type="protein sequence ID" value="BAC38920.1"/>
    <property type="molecule type" value="mRNA"/>
</dbReference>
<dbReference type="EMBL" id="BC031191">
    <property type="protein sequence ID" value="AAH31191.1"/>
    <property type="molecule type" value="mRNA"/>
</dbReference>
<dbReference type="EMBL" id="BC043097">
    <property type="protein sequence ID" value="AAH43097.1"/>
    <property type="molecule type" value="mRNA"/>
</dbReference>
<dbReference type="EMBL" id="BC057053">
    <property type="protein sequence ID" value="AAH57053.1"/>
    <property type="molecule type" value="mRNA"/>
</dbReference>
<dbReference type="CCDS" id="CCDS28266.1"/>
<dbReference type="RefSeq" id="NP_001344345.1">
    <property type="nucleotide sequence ID" value="NM_001357416.1"/>
</dbReference>
<dbReference type="RefSeq" id="NP_848762.1">
    <property type="nucleotide sequence ID" value="NM_178647.3"/>
</dbReference>
<dbReference type="RefSeq" id="XP_006521721.1">
    <property type="nucleotide sequence ID" value="XM_006521658.2"/>
</dbReference>
<dbReference type="SMR" id="Q8BHG9"/>
<dbReference type="BioGRID" id="222999">
    <property type="interactions" value="2"/>
</dbReference>
<dbReference type="FunCoup" id="Q8BHG9">
    <property type="interactions" value="4177"/>
</dbReference>
<dbReference type="IntAct" id="Q8BHG9">
    <property type="interactions" value="2"/>
</dbReference>
<dbReference type="STRING" id="10090.ENSMUSP00000065845"/>
<dbReference type="iPTMnet" id="Q8BHG9"/>
<dbReference type="PhosphoSitePlus" id="Q8BHG9"/>
<dbReference type="jPOST" id="Q8BHG9"/>
<dbReference type="PaxDb" id="10090-ENSMUSP00000065845"/>
<dbReference type="PeptideAtlas" id="Q8BHG9"/>
<dbReference type="ProteomicsDB" id="281656"/>
<dbReference type="Pumba" id="Q8BHG9"/>
<dbReference type="Antibodypedia" id="32047">
    <property type="antibodies" value="224 antibodies from 29 providers"/>
</dbReference>
<dbReference type="DNASU" id="106143"/>
<dbReference type="Ensembl" id="ENSMUST00000067744.8">
    <property type="protein sequence ID" value="ENSMUSP00000065845.8"/>
    <property type="gene ID" value="ENSMUSG00000054604.8"/>
</dbReference>
<dbReference type="GeneID" id="106143"/>
<dbReference type="KEGG" id="mmu:106143"/>
<dbReference type="UCSC" id="uc007zqe.1">
    <property type="organism name" value="mouse"/>
</dbReference>
<dbReference type="AGR" id="MGI:2146370"/>
<dbReference type="CTD" id="8545"/>
<dbReference type="MGI" id="MGI:2146370">
    <property type="gene designation" value="Cggbp1"/>
</dbReference>
<dbReference type="VEuPathDB" id="HostDB:ENSMUSG00000054604"/>
<dbReference type="eggNOG" id="ENOG502RXX8">
    <property type="taxonomic scope" value="Eukaryota"/>
</dbReference>
<dbReference type="GeneTree" id="ENSGT00390000017898"/>
<dbReference type="HOGENOM" id="CLU_132996_0_0_1"/>
<dbReference type="InParanoid" id="Q8BHG9"/>
<dbReference type="OMA" id="GKLYCTF"/>
<dbReference type="OrthoDB" id="9434539at2759"/>
<dbReference type="PhylomeDB" id="Q8BHG9"/>
<dbReference type="TreeFam" id="TF335518"/>
<dbReference type="BioGRID-ORCS" id="106143">
    <property type="hits" value="6 hits in 78 CRISPR screens"/>
</dbReference>
<dbReference type="ChiTaRS" id="Cggbp1">
    <property type="organism name" value="mouse"/>
</dbReference>
<dbReference type="PRO" id="PR:Q8BHG9"/>
<dbReference type="Proteomes" id="UP000000589">
    <property type="component" value="Chromosome 16"/>
</dbReference>
<dbReference type="RNAct" id="Q8BHG9">
    <property type="molecule type" value="protein"/>
</dbReference>
<dbReference type="Bgee" id="ENSMUSG00000054604">
    <property type="expression patterns" value="Expressed in medial ganglionic eminence and 254 other cell types or tissues"/>
</dbReference>
<dbReference type="GO" id="GO:0005829">
    <property type="term" value="C:cytosol"/>
    <property type="evidence" value="ECO:0007669"/>
    <property type="project" value="Ensembl"/>
</dbReference>
<dbReference type="GO" id="GO:0005654">
    <property type="term" value="C:nucleoplasm"/>
    <property type="evidence" value="ECO:0007669"/>
    <property type="project" value="Ensembl"/>
</dbReference>
<dbReference type="GO" id="GO:0005634">
    <property type="term" value="C:nucleus"/>
    <property type="evidence" value="ECO:0000266"/>
    <property type="project" value="MGI"/>
</dbReference>
<dbReference type="GO" id="GO:0140297">
    <property type="term" value="F:DNA-binding transcription factor binding"/>
    <property type="evidence" value="ECO:0007669"/>
    <property type="project" value="Ensembl"/>
</dbReference>
<dbReference type="GO" id="GO:0003690">
    <property type="term" value="F:double-stranded DNA binding"/>
    <property type="evidence" value="ECO:0000266"/>
    <property type="project" value="MGI"/>
</dbReference>
<dbReference type="GO" id="GO:0042802">
    <property type="term" value="F:identical protein binding"/>
    <property type="evidence" value="ECO:0007669"/>
    <property type="project" value="Ensembl"/>
</dbReference>
<dbReference type="GO" id="GO:0040029">
    <property type="term" value="P:epigenetic regulation of gene expression"/>
    <property type="evidence" value="ECO:0007669"/>
    <property type="project" value="Ensembl"/>
</dbReference>
<dbReference type="GO" id="GO:0000122">
    <property type="term" value="P:negative regulation of transcription by RNA polymerase II"/>
    <property type="evidence" value="ECO:0007669"/>
    <property type="project" value="Ensembl"/>
</dbReference>
<dbReference type="InterPro" id="IPR033375">
    <property type="entry name" value="Cggbp1"/>
</dbReference>
<dbReference type="PANTHER" id="PTHR32344">
    <property type="entry name" value="U1-TYPE DOMAIN-CONTAINING PROTEIN"/>
    <property type="match status" value="1"/>
</dbReference>
<dbReference type="PANTHER" id="PTHR32344:SF1">
    <property type="entry name" value="U1-TYPE DOMAIN-CONTAINING PROTEIN"/>
    <property type="match status" value="1"/>
</dbReference>
<accession>Q8BHG9</accession>
<accession>Q8K2K1</accession>